<sequence length="633" mass="72338">MIRITFSAEQKVKEYSGKVTGFDILQPDVLKEAIAFKVNGELHDLSREIEADAEIEVIQLSDEAGLDIIRHDAAHIMAQAVKELFPNTQITIGPTIQDGFYYDFATGRTFTTDDLTAIEKKMKEIVKSNHRFVREVWTRKQAIDFFSDIGEKYKVDIISSIPEGENLTVYRQGDFIDLCRGPHSPSTGRVKAFKLMKVAGAYWRGDAKGPMLQRIYGTAWRNKDELNAYLECLKEAEKRDHRKIAKDMDLFHIQEEAVGQVFWHEQGYILYNVLESYIRKKLINNGYFEVKTPILVSKELWEKSGHWDKFRENMFIVDESESKKLAIKPMNCPCHVQIFNSHTRSYRDLPIRMAEFGTCHRNESSGSLHGLMRVRGFTQDDAHIFCMEEQVNSETIKFCDLLKEVYSELGFNEISVKFSDRPDVRAGDDEVWDRAEKALLEAVKEAGLSYELSPGEGAFYGPKLEFVLKDAIGRSWQCGTLQVDFILPERLGAFYIGADGHKHHPVMLHRAILGTFERFIGILIENYAGKFPVWLAPTQLAILTITNEADGYATKISNVLKEQGVRVKTDLTNEKISYKIRLHSLNKVPILWIVGKNEVTSKTVSVRNLGSERQESFSLEKAIELLLKSINLN</sequence>
<name>SYT_WOLWR</name>
<feature type="chain" id="PRO_1000199577" description="Threonine--tRNA ligase">
    <location>
        <begin position="1"/>
        <end position="633"/>
    </location>
</feature>
<feature type="domain" description="TGS" evidence="2">
    <location>
        <begin position="1"/>
        <end position="59"/>
    </location>
</feature>
<feature type="region of interest" description="Catalytic" evidence="1">
    <location>
        <begin position="240"/>
        <end position="532"/>
    </location>
</feature>
<feature type="binding site" evidence="1">
    <location>
        <position position="332"/>
    </location>
    <ligand>
        <name>Zn(2+)</name>
        <dbReference type="ChEBI" id="CHEBI:29105"/>
    </ligand>
</feature>
<feature type="binding site" evidence="1">
    <location>
        <position position="383"/>
    </location>
    <ligand>
        <name>Zn(2+)</name>
        <dbReference type="ChEBI" id="CHEBI:29105"/>
    </ligand>
</feature>
<feature type="binding site" evidence="1">
    <location>
        <position position="509"/>
    </location>
    <ligand>
        <name>Zn(2+)</name>
        <dbReference type="ChEBI" id="CHEBI:29105"/>
    </ligand>
</feature>
<accession>C0R403</accession>
<dbReference type="EC" id="6.1.1.3" evidence="1"/>
<dbReference type="EMBL" id="CP001391">
    <property type="protein sequence ID" value="ACN95645.1"/>
    <property type="molecule type" value="Genomic_DNA"/>
</dbReference>
<dbReference type="RefSeq" id="WP_012673323.1">
    <property type="nucleotide sequence ID" value="NZ_MKIF01000064.1"/>
</dbReference>
<dbReference type="SMR" id="C0R403"/>
<dbReference type="STRING" id="66084.WRi_009280"/>
<dbReference type="KEGG" id="wri:WRi_009280"/>
<dbReference type="HOGENOM" id="CLU_008554_0_1_5"/>
<dbReference type="Proteomes" id="UP000001293">
    <property type="component" value="Chromosome"/>
</dbReference>
<dbReference type="GO" id="GO:0005737">
    <property type="term" value="C:cytoplasm"/>
    <property type="evidence" value="ECO:0007669"/>
    <property type="project" value="UniProtKB-SubCell"/>
</dbReference>
<dbReference type="GO" id="GO:0005524">
    <property type="term" value="F:ATP binding"/>
    <property type="evidence" value="ECO:0007669"/>
    <property type="project" value="UniProtKB-UniRule"/>
</dbReference>
<dbReference type="GO" id="GO:0046872">
    <property type="term" value="F:metal ion binding"/>
    <property type="evidence" value="ECO:0007669"/>
    <property type="project" value="UniProtKB-KW"/>
</dbReference>
<dbReference type="GO" id="GO:0004829">
    <property type="term" value="F:threonine-tRNA ligase activity"/>
    <property type="evidence" value="ECO:0007669"/>
    <property type="project" value="UniProtKB-UniRule"/>
</dbReference>
<dbReference type="GO" id="GO:0000049">
    <property type="term" value="F:tRNA binding"/>
    <property type="evidence" value="ECO:0007669"/>
    <property type="project" value="UniProtKB-KW"/>
</dbReference>
<dbReference type="GO" id="GO:0006435">
    <property type="term" value="P:threonyl-tRNA aminoacylation"/>
    <property type="evidence" value="ECO:0007669"/>
    <property type="project" value="UniProtKB-UniRule"/>
</dbReference>
<dbReference type="CDD" id="cd01667">
    <property type="entry name" value="TGS_ThrRS"/>
    <property type="match status" value="1"/>
</dbReference>
<dbReference type="CDD" id="cd00860">
    <property type="entry name" value="ThrRS_anticodon"/>
    <property type="match status" value="1"/>
</dbReference>
<dbReference type="CDD" id="cd00771">
    <property type="entry name" value="ThrRS_core"/>
    <property type="match status" value="1"/>
</dbReference>
<dbReference type="FunFam" id="3.30.54.20:FF:000002">
    <property type="entry name" value="Threonine--tRNA ligase"/>
    <property type="match status" value="1"/>
</dbReference>
<dbReference type="FunFam" id="3.30.930.10:FF:000002">
    <property type="entry name" value="Threonine--tRNA ligase"/>
    <property type="match status" value="1"/>
</dbReference>
<dbReference type="FunFam" id="3.40.50.800:FF:000001">
    <property type="entry name" value="Threonine--tRNA ligase"/>
    <property type="match status" value="1"/>
</dbReference>
<dbReference type="FunFam" id="3.30.980.10:FF:000005">
    <property type="entry name" value="Threonyl-tRNA synthetase, mitochondrial"/>
    <property type="match status" value="1"/>
</dbReference>
<dbReference type="Gene3D" id="3.10.20.30">
    <property type="match status" value="1"/>
</dbReference>
<dbReference type="Gene3D" id="3.30.54.20">
    <property type="match status" value="1"/>
</dbReference>
<dbReference type="Gene3D" id="3.40.50.800">
    <property type="entry name" value="Anticodon-binding domain"/>
    <property type="match status" value="1"/>
</dbReference>
<dbReference type="Gene3D" id="3.30.930.10">
    <property type="entry name" value="Bira Bifunctional Protein, Domain 2"/>
    <property type="match status" value="1"/>
</dbReference>
<dbReference type="Gene3D" id="3.30.980.10">
    <property type="entry name" value="Threonyl-trna Synthetase, Chain A, domain 2"/>
    <property type="match status" value="1"/>
</dbReference>
<dbReference type="HAMAP" id="MF_00184">
    <property type="entry name" value="Thr_tRNA_synth"/>
    <property type="match status" value="1"/>
</dbReference>
<dbReference type="InterPro" id="IPR002314">
    <property type="entry name" value="aa-tRNA-synt_IIb"/>
</dbReference>
<dbReference type="InterPro" id="IPR006195">
    <property type="entry name" value="aa-tRNA-synth_II"/>
</dbReference>
<dbReference type="InterPro" id="IPR045864">
    <property type="entry name" value="aa-tRNA-synth_II/BPL/LPL"/>
</dbReference>
<dbReference type="InterPro" id="IPR004154">
    <property type="entry name" value="Anticodon-bd"/>
</dbReference>
<dbReference type="InterPro" id="IPR036621">
    <property type="entry name" value="Anticodon-bd_dom_sf"/>
</dbReference>
<dbReference type="InterPro" id="IPR012675">
    <property type="entry name" value="Beta-grasp_dom_sf"/>
</dbReference>
<dbReference type="InterPro" id="IPR004095">
    <property type="entry name" value="TGS"/>
</dbReference>
<dbReference type="InterPro" id="IPR012676">
    <property type="entry name" value="TGS-like"/>
</dbReference>
<dbReference type="InterPro" id="IPR002320">
    <property type="entry name" value="Thr-tRNA-ligase_IIa"/>
</dbReference>
<dbReference type="InterPro" id="IPR018163">
    <property type="entry name" value="Thr/Ala-tRNA-synth_IIc_edit"/>
</dbReference>
<dbReference type="InterPro" id="IPR047246">
    <property type="entry name" value="ThrRS_anticodon"/>
</dbReference>
<dbReference type="InterPro" id="IPR033728">
    <property type="entry name" value="ThrRS_core"/>
</dbReference>
<dbReference type="InterPro" id="IPR012947">
    <property type="entry name" value="tRNA_SAD"/>
</dbReference>
<dbReference type="NCBIfam" id="TIGR00418">
    <property type="entry name" value="thrS"/>
    <property type="match status" value="1"/>
</dbReference>
<dbReference type="PANTHER" id="PTHR11451:SF44">
    <property type="entry name" value="THREONINE--TRNA LIGASE, CHLOROPLASTIC_MITOCHONDRIAL 2"/>
    <property type="match status" value="1"/>
</dbReference>
<dbReference type="PANTHER" id="PTHR11451">
    <property type="entry name" value="THREONINE-TRNA LIGASE"/>
    <property type="match status" value="1"/>
</dbReference>
<dbReference type="Pfam" id="PF03129">
    <property type="entry name" value="HGTP_anticodon"/>
    <property type="match status" value="1"/>
</dbReference>
<dbReference type="Pfam" id="PF00587">
    <property type="entry name" value="tRNA-synt_2b"/>
    <property type="match status" value="1"/>
</dbReference>
<dbReference type="Pfam" id="PF07973">
    <property type="entry name" value="tRNA_SAD"/>
    <property type="match status" value="1"/>
</dbReference>
<dbReference type="PRINTS" id="PR01047">
    <property type="entry name" value="TRNASYNTHTHR"/>
</dbReference>
<dbReference type="SMART" id="SM00863">
    <property type="entry name" value="tRNA_SAD"/>
    <property type="match status" value="1"/>
</dbReference>
<dbReference type="SUPFAM" id="SSF52954">
    <property type="entry name" value="Class II aaRS ABD-related"/>
    <property type="match status" value="1"/>
</dbReference>
<dbReference type="SUPFAM" id="SSF55681">
    <property type="entry name" value="Class II aaRS and biotin synthetases"/>
    <property type="match status" value="1"/>
</dbReference>
<dbReference type="SUPFAM" id="SSF81271">
    <property type="entry name" value="TGS-like"/>
    <property type="match status" value="1"/>
</dbReference>
<dbReference type="SUPFAM" id="SSF55186">
    <property type="entry name" value="ThrRS/AlaRS common domain"/>
    <property type="match status" value="1"/>
</dbReference>
<dbReference type="PROSITE" id="PS50862">
    <property type="entry name" value="AA_TRNA_LIGASE_II"/>
    <property type="match status" value="1"/>
</dbReference>
<dbReference type="PROSITE" id="PS51880">
    <property type="entry name" value="TGS"/>
    <property type="match status" value="1"/>
</dbReference>
<reference key="1">
    <citation type="journal article" date="2009" name="Proc. Natl. Acad. Sci. U.S.A.">
        <title>The mosaic genome structure of the Wolbachia wRi strain infecting Drosophila simulans.</title>
        <authorList>
            <person name="Klasson L."/>
            <person name="Westberg J."/>
            <person name="Sapountzis P."/>
            <person name="Naeslund K."/>
            <person name="Lutnaes Y."/>
            <person name="Darby A.C."/>
            <person name="Veneti Z."/>
            <person name="Chen L."/>
            <person name="Braig H.R."/>
            <person name="Garrett R."/>
            <person name="Bourtzis K."/>
            <person name="Andersson S.G."/>
        </authorList>
    </citation>
    <scope>NUCLEOTIDE SEQUENCE [LARGE SCALE GENOMIC DNA]</scope>
    <source>
        <strain>wRi</strain>
    </source>
</reference>
<protein>
    <recommendedName>
        <fullName evidence="1">Threonine--tRNA ligase</fullName>
        <ecNumber evidence="1">6.1.1.3</ecNumber>
    </recommendedName>
    <alternativeName>
        <fullName evidence="1">Threonyl-tRNA synthetase</fullName>
        <shortName evidence="1">ThrRS</shortName>
    </alternativeName>
</protein>
<organism>
    <name type="scientific">Wolbachia sp. subsp. Drosophila simulans (strain wRi)</name>
    <dbReference type="NCBI Taxonomy" id="66084"/>
    <lineage>
        <taxon>Bacteria</taxon>
        <taxon>Pseudomonadati</taxon>
        <taxon>Pseudomonadota</taxon>
        <taxon>Alphaproteobacteria</taxon>
        <taxon>Rickettsiales</taxon>
        <taxon>Anaplasmataceae</taxon>
        <taxon>Wolbachieae</taxon>
        <taxon>Wolbachia</taxon>
    </lineage>
</organism>
<comment type="function">
    <text evidence="1">Catalyzes the attachment of threonine to tRNA(Thr) in a two-step reaction: L-threonine is first activated by ATP to form Thr-AMP and then transferred to the acceptor end of tRNA(Thr). Also edits incorrectly charged L-seryl-tRNA(Thr).</text>
</comment>
<comment type="catalytic activity">
    <reaction evidence="1">
        <text>tRNA(Thr) + L-threonine + ATP = L-threonyl-tRNA(Thr) + AMP + diphosphate + H(+)</text>
        <dbReference type="Rhea" id="RHEA:24624"/>
        <dbReference type="Rhea" id="RHEA-COMP:9670"/>
        <dbReference type="Rhea" id="RHEA-COMP:9704"/>
        <dbReference type="ChEBI" id="CHEBI:15378"/>
        <dbReference type="ChEBI" id="CHEBI:30616"/>
        <dbReference type="ChEBI" id="CHEBI:33019"/>
        <dbReference type="ChEBI" id="CHEBI:57926"/>
        <dbReference type="ChEBI" id="CHEBI:78442"/>
        <dbReference type="ChEBI" id="CHEBI:78534"/>
        <dbReference type="ChEBI" id="CHEBI:456215"/>
        <dbReference type="EC" id="6.1.1.3"/>
    </reaction>
</comment>
<comment type="cofactor">
    <cofactor evidence="1">
        <name>Zn(2+)</name>
        <dbReference type="ChEBI" id="CHEBI:29105"/>
    </cofactor>
    <text evidence="1">Binds 1 zinc ion per subunit.</text>
</comment>
<comment type="subunit">
    <text evidence="1">Homodimer.</text>
</comment>
<comment type="subcellular location">
    <subcellularLocation>
        <location evidence="1">Cytoplasm</location>
    </subcellularLocation>
</comment>
<comment type="similarity">
    <text evidence="1">Belongs to the class-II aminoacyl-tRNA synthetase family.</text>
</comment>
<evidence type="ECO:0000255" key="1">
    <source>
        <dbReference type="HAMAP-Rule" id="MF_00184"/>
    </source>
</evidence>
<evidence type="ECO:0000255" key="2">
    <source>
        <dbReference type="PROSITE-ProRule" id="PRU01228"/>
    </source>
</evidence>
<proteinExistence type="inferred from homology"/>
<gene>
    <name evidence="1" type="primary">thrS</name>
    <name type="ordered locus">WRi_009280</name>
</gene>
<keyword id="KW-0030">Aminoacyl-tRNA synthetase</keyword>
<keyword id="KW-0067">ATP-binding</keyword>
<keyword id="KW-0963">Cytoplasm</keyword>
<keyword id="KW-0436">Ligase</keyword>
<keyword id="KW-0479">Metal-binding</keyword>
<keyword id="KW-0547">Nucleotide-binding</keyword>
<keyword id="KW-0648">Protein biosynthesis</keyword>
<keyword id="KW-0694">RNA-binding</keyword>
<keyword id="KW-0820">tRNA-binding</keyword>
<keyword id="KW-0862">Zinc</keyword>